<dbReference type="EC" id="2.7.1.24" evidence="1"/>
<dbReference type="EMBL" id="Z46257">
    <property type="protein sequence ID" value="CAA86366.1"/>
    <property type="molecule type" value="Genomic_DNA"/>
</dbReference>
<dbReference type="EMBL" id="AL583921">
    <property type="protein sequence ID" value="CAC31764.1"/>
    <property type="molecule type" value="Genomic_DNA"/>
</dbReference>
<dbReference type="PIR" id="S77661">
    <property type="entry name" value="S77661"/>
</dbReference>
<dbReference type="RefSeq" id="NP_301984.1">
    <property type="nucleotide sequence ID" value="NC_002677.1"/>
</dbReference>
<dbReference type="RefSeq" id="WP_010908305.1">
    <property type="nucleotide sequence ID" value="NC_002677.1"/>
</dbReference>
<dbReference type="SMR" id="Q50178"/>
<dbReference type="STRING" id="272631.gene:17575222"/>
<dbReference type="KEGG" id="mle:ML1383"/>
<dbReference type="PATRIC" id="fig|272631.5.peg.2566"/>
<dbReference type="Leproma" id="ML1383"/>
<dbReference type="eggNOG" id="COG0237">
    <property type="taxonomic scope" value="Bacteria"/>
</dbReference>
<dbReference type="eggNOG" id="COG2320">
    <property type="taxonomic scope" value="Bacteria"/>
</dbReference>
<dbReference type="HOGENOM" id="CLU_067032_0_0_11"/>
<dbReference type="OrthoDB" id="9812943at2"/>
<dbReference type="UniPathway" id="UPA00241">
    <property type="reaction ID" value="UER00356"/>
</dbReference>
<dbReference type="Proteomes" id="UP000000806">
    <property type="component" value="Chromosome"/>
</dbReference>
<dbReference type="GO" id="GO:0005737">
    <property type="term" value="C:cytoplasm"/>
    <property type="evidence" value="ECO:0007669"/>
    <property type="project" value="UniProtKB-SubCell"/>
</dbReference>
<dbReference type="GO" id="GO:0005524">
    <property type="term" value="F:ATP binding"/>
    <property type="evidence" value="ECO:0007669"/>
    <property type="project" value="UniProtKB-UniRule"/>
</dbReference>
<dbReference type="GO" id="GO:0004140">
    <property type="term" value="F:dephospho-CoA kinase activity"/>
    <property type="evidence" value="ECO:0007669"/>
    <property type="project" value="UniProtKB-UniRule"/>
</dbReference>
<dbReference type="GO" id="GO:0015937">
    <property type="term" value="P:coenzyme A biosynthetic process"/>
    <property type="evidence" value="ECO:0007669"/>
    <property type="project" value="UniProtKB-UniRule"/>
</dbReference>
<dbReference type="CDD" id="cd02022">
    <property type="entry name" value="DPCK"/>
    <property type="match status" value="1"/>
</dbReference>
<dbReference type="Gene3D" id="3.30.460.10">
    <property type="entry name" value="Beta Polymerase, domain 2"/>
    <property type="match status" value="1"/>
</dbReference>
<dbReference type="Gene3D" id="3.40.50.300">
    <property type="entry name" value="P-loop containing nucleotide triphosphate hydrolases"/>
    <property type="match status" value="1"/>
</dbReference>
<dbReference type="HAMAP" id="MF_00376">
    <property type="entry name" value="Dephospho_CoA_kinase"/>
    <property type="match status" value="1"/>
</dbReference>
<dbReference type="InterPro" id="IPR001977">
    <property type="entry name" value="Depp_CoAkinase"/>
</dbReference>
<dbReference type="InterPro" id="IPR007344">
    <property type="entry name" value="GrpB/CoaE"/>
</dbReference>
<dbReference type="InterPro" id="IPR043519">
    <property type="entry name" value="NT_sf"/>
</dbReference>
<dbReference type="InterPro" id="IPR027417">
    <property type="entry name" value="P-loop_NTPase"/>
</dbReference>
<dbReference type="NCBIfam" id="TIGR00152">
    <property type="entry name" value="dephospho-CoA kinase"/>
    <property type="match status" value="1"/>
</dbReference>
<dbReference type="NCBIfam" id="NF002879">
    <property type="entry name" value="PRK03333.1"/>
    <property type="match status" value="1"/>
</dbReference>
<dbReference type="PANTHER" id="PTHR10695:SF46">
    <property type="entry name" value="BIFUNCTIONAL COENZYME A SYNTHASE-RELATED"/>
    <property type="match status" value="1"/>
</dbReference>
<dbReference type="PANTHER" id="PTHR10695">
    <property type="entry name" value="DEPHOSPHO-COA KINASE-RELATED"/>
    <property type="match status" value="1"/>
</dbReference>
<dbReference type="Pfam" id="PF01121">
    <property type="entry name" value="CoaE"/>
    <property type="match status" value="1"/>
</dbReference>
<dbReference type="Pfam" id="PF04229">
    <property type="entry name" value="GrpB"/>
    <property type="match status" value="1"/>
</dbReference>
<dbReference type="SUPFAM" id="SSF81301">
    <property type="entry name" value="Nucleotidyltransferase"/>
    <property type="match status" value="1"/>
</dbReference>
<dbReference type="SUPFAM" id="SSF52540">
    <property type="entry name" value="P-loop containing nucleoside triphosphate hydrolases"/>
    <property type="match status" value="1"/>
</dbReference>
<dbReference type="PROSITE" id="PS51219">
    <property type="entry name" value="DPCK"/>
    <property type="match status" value="1"/>
</dbReference>
<accession>Q50178</accession>
<comment type="function">
    <text evidence="1">Catalyzes the phosphorylation of the 3'-hydroxyl group of dephosphocoenzyme A to form coenzyme A.</text>
</comment>
<comment type="catalytic activity">
    <reaction evidence="1">
        <text>3'-dephospho-CoA + ATP = ADP + CoA + H(+)</text>
        <dbReference type="Rhea" id="RHEA:18245"/>
        <dbReference type="ChEBI" id="CHEBI:15378"/>
        <dbReference type="ChEBI" id="CHEBI:30616"/>
        <dbReference type="ChEBI" id="CHEBI:57287"/>
        <dbReference type="ChEBI" id="CHEBI:57328"/>
        <dbReference type="ChEBI" id="CHEBI:456216"/>
        <dbReference type="EC" id="2.7.1.24"/>
    </reaction>
</comment>
<comment type="pathway">
    <text evidence="1">Cofactor biosynthesis; coenzyme A biosynthesis; CoA from (R)-pantothenate: step 5/5.</text>
</comment>
<comment type="subcellular location">
    <subcellularLocation>
        <location evidence="1">Cytoplasm</location>
    </subcellularLocation>
</comment>
<comment type="domain">
    <text evidence="1">The C-terminal UPF0157 domain is involved in the proper folding of the full length enzyme.</text>
</comment>
<comment type="similarity">
    <text evidence="2">In the N-terminal section; belongs to the CoaE family.</text>
</comment>
<comment type="similarity">
    <text evidence="2">In the C-terminal section; belongs to the UPF0157 (GrpB) family.</text>
</comment>
<proteinExistence type="inferred from homology"/>
<keyword id="KW-0067">ATP-binding</keyword>
<keyword id="KW-0173">Coenzyme A biosynthesis</keyword>
<keyword id="KW-0963">Cytoplasm</keyword>
<keyword id="KW-0418">Kinase</keyword>
<keyword id="KW-0547">Nucleotide-binding</keyword>
<keyword id="KW-1185">Reference proteome</keyword>
<keyword id="KW-0808">Transferase</keyword>
<protein>
    <recommendedName>
        <fullName evidence="1">Dephospho-CoA kinase</fullName>
        <ecNumber evidence="1">2.7.1.24</ecNumber>
    </recommendedName>
    <alternativeName>
        <fullName evidence="1">Dephosphocoenzyme A kinase</fullName>
    </alternativeName>
</protein>
<name>COAE_MYCLE</name>
<organism>
    <name type="scientific">Mycobacterium leprae (strain TN)</name>
    <dbReference type="NCBI Taxonomy" id="272631"/>
    <lineage>
        <taxon>Bacteria</taxon>
        <taxon>Bacillati</taxon>
        <taxon>Actinomycetota</taxon>
        <taxon>Actinomycetes</taxon>
        <taxon>Mycobacteriales</taxon>
        <taxon>Mycobacteriaceae</taxon>
        <taxon>Mycobacterium</taxon>
    </lineage>
</organism>
<evidence type="ECO:0000255" key="1">
    <source>
        <dbReference type="HAMAP-Rule" id="MF_00376"/>
    </source>
</evidence>
<evidence type="ECO:0000305" key="2"/>
<gene>
    <name evidence="1" type="primary">coaE</name>
    <name type="ordered locus">ML1383</name>
    <name type="ORF">o410</name>
</gene>
<sequence length="410" mass="44976">MLCIGITGGIGAGKSLLSSTFSQCGGIVVDGDVLAREVVQPGTKGLSSLVDAFGQDILLPGGALDRRALAVKAFRDDAARNVLNGIVHPLVANRRAEIIAAISEDAVVVEDIPLLVESGMAHLFPLVVVVHADVELRVRRLVEQRGVAETDARARIAAQASDEERRAVADVWLDNSSTPEVLVQRARDLWYHRILPFAYNLSQRQAVYAPAGLVTSDPIWLGQAKRIVARLKTTCGHKALRVDHIGSTAVPHYPGFPDFQAKDIIDIQITVESLAMADELADPLLSAGYPRLEHVTGDAAKTNARSTVDRYEHSSDPNLWHKRFHASADPGRPTYVHIRVAGWPNQQFGLLFVDWLKANPGVRADYLDVKRTADRLAAGDMGRYADAKEPWLLDAYRRAWEWADSTGWRL</sequence>
<feature type="chain" id="PRO_0000172963" description="Dephospho-CoA kinase">
    <location>
        <begin position="1"/>
        <end position="410"/>
    </location>
</feature>
<feature type="domain" description="DPCK" evidence="1">
    <location>
        <begin position="3"/>
        <end position="201"/>
    </location>
</feature>
<feature type="region of interest" description="UPF0157">
    <location>
        <begin position="196"/>
        <end position="410"/>
    </location>
</feature>
<feature type="binding site" evidence="1">
    <location>
        <begin position="11"/>
        <end position="16"/>
    </location>
    <ligand>
        <name>ATP</name>
        <dbReference type="ChEBI" id="CHEBI:30616"/>
    </ligand>
</feature>
<reference key="1">
    <citation type="journal article" date="1995" name="Mol. Microbiol.">
        <title>The Mycobacterium leprae genome: systematic sequence analysis identifies key catabolic enzymes, ATP-dependent transport systems and a novel polA locus associated with genomic variability.</title>
        <authorList>
            <person name="Fsihi H."/>
            <person name="Cole S.T."/>
        </authorList>
    </citation>
    <scope>NUCLEOTIDE SEQUENCE [GENOMIC DNA]</scope>
</reference>
<reference key="2">
    <citation type="journal article" date="2001" name="Nature">
        <title>Massive gene decay in the leprosy bacillus.</title>
        <authorList>
            <person name="Cole S.T."/>
            <person name="Eiglmeier K."/>
            <person name="Parkhill J."/>
            <person name="James K.D."/>
            <person name="Thomson N.R."/>
            <person name="Wheeler P.R."/>
            <person name="Honore N."/>
            <person name="Garnier T."/>
            <person name="Churcher C.M."/>
            <person name="Harris D.E."/>
            <person name="Mungall K.L."/>
            <person name="Basham D."/>
            <person name="Brown D."/>
            <person name="Chillingworth T."/>
            <person name="Connor R."/>
            <person name="Davies R.M."/>
            <person name="Devlin K."/>
            <person name="Duthoy S."/>
            <person name="Feltwell T."/>
            <person name="Fraser A."/>
            <person name="Hamlin N."/>
            <person name="Holroyd S."/>
            <person name="Hornsby T."/>
            <person name="Jagels K."/>
            <person name="Lacroix C."/>
            <person name="Maclean J."/>
            <person name="Moule S."/>
            <person name="Murphy L.D."/>
            <person name="Oliver K."/>
            <person name="Quail M.A."/>
            <person name="Rajandream M.A."/>
            <person name="Rutherford K.M."/>
            <person name="Rutter S."/>
            <person name="Seeger K."/>
            <person name="Simon S."/>
            <person name="Simmonds M."/>
            <person name="Skelton J."/>
            <person name="Squares R."/>
            <person name="Squares S."/>
            <person name="Stevens K."/>
            <person name="Taylor K."/>
            <person name="Whitehead S."/>
            <person name="Woodward J.R."/>
            <person name="Barrell B.G."/>
        </authorList>
    </citation>
    <scope>NUCLEOTIDE SEQUENCE [LARGE SCALE GENOMIC DNA]</scope>
    <source>
        <strain>TN</strain>
    </source>
</reference>